<proteinExistence type="inferred from homology"/>
<keyword id="KW-0963">Cytoplasm</keyword>
<keyword id="KW-0255">Endonuclease</keyword>
<keyword id="KW-0378">Hydrolase</keyword>
<keyword id="KW-0460">Magnesium</keyword>
<keyword id="KW-0479">Metal-binding</keyword>
<keyword id="KW-0540">Nuclease</keyword>
<keyword id="KW-1185">Reference proteome</keyword>
<gene>
    <name evidence="1" type="primary">rnhA</name>
    <name type="ordered locus">PMN2A_1567</name>
</gene>
<dbReference type="EC" id="3.1.26.4" evidence="1"/>
<dbReference type="EMBL" id="CP000095">
    <property type="protein sequence ID" value="AAZ59055.1"/>
    <property type="molecule type" value="Genomic_DNA"/>
</dbReference>
<dbReference type="RefSeq" id="WP_011294200.1">
    <property type="nucleotide sequence ID" value="NC_007335.2"/>
</dbReference>
<dbReference type="SMR" id="Q46HH3"/>
<dbReference type="STRING" id="59920.PMN2A_1567"/>
<dbReference type="KEGG" id="pmn:PMN2A_1567"/>
<dbReference type="HOGENOM" id="CLU_030894_6_1_3"/>
<dbReference type="OrthoDB" id="7845843at2"/>
<dbReference type="PhylomeDB" id="Q46HH3"/>
<dbReference type="Proteomes" id="UP000002535">
    <property type="component" value="Chromosome"/>
</dbReference>
<dbReference type="GO" id="GO:0005737">
    <property type="term" value="C:cytoplasm"/>
    <property type="evidence" value="ECO:0007669"/>
    <property type="project" value="UniProtKB-SubCell"/>
</dbReference>
<dbReference type="GO" id="GO:0000287">
    <property type="term" value="F:magnesium ion binding"/>
    <property type="evidence" value="ECO:0007669"/>
    <property type="project" value="UniProtKB-UniRule"/>
</dbReference>
<dbReference type="GO" id="GO:0003676">
    <property type="term" value="F:nucleic acid binding"/>
    <property type="evidence" value="ECO:0007669"/>
    <property type="project" value="InterPro"/>
</dbReference>
<dbReference type="GO" id="GO:0004523">
    <property type="term" value="F:RNA-DNA hybrid ribonuclease activity"/>
    <property type="evidence" value="ECO:0007669"/>
    <property type="project" value="UniProtKB-UniRule"/>
</dbReference>
<dbReference type="GO" id="GO:0043137">
    <property type="term" value="P:DNA replication, removal of RNA primer"/>
    <property type="evidence" value="ECO:0007669"/>
    <property type="project" value="TreeGrafter"/>
</dbReference>
<dbReference type="CDD" id="cd09278">
    <property type="entry name" value="RNase_HI_prokaryote_like"/>
    <property type="match status" value="1"/>
</dbReference>
<dbReference type="Gene3D" id="3.30.420.10">
    <property type="entry name" value="Ribonuclease H-like superfamily/Ribonuclease H"/>
    <property type="match status" value="1"/>
</dbReference>
<dbReference type="HAMAP" id="MF_00042">
    <property type="entry name" value="RNase_H"/>
    <property type="match status" value="1"/>
</dbReference>
<dbReference type="InterPro" id="IPR050092">
    <property type="entry name" value="RNase_H"/>
</dbReference>
<dbReference type="InterPro" id="IPR012337">
    <property type="entry name" value="RNaseH-like_sf"/>
</dbReference>
<dbReference type="InterPro" id="IPR002156">
    <property type="entry name" value="RNaseH_domain"/>
</dbReference>
<dbReference type="InterPro" id="IPR036397">
    <property type="entry name" value="RNaseH_sf"/>
</dbReference>
<dbReference type="InterPro" id="IPR022892">
    <property type="entry name" value="RNaseHI"/>
</dbReference>
<dbReference type="PANTHER" id="PTHR10642">
    <property type="entry name" value="RIBONUCLEASE H1"/>
    <property type="match status" value="1"/>
</dbReference>
<dbReference type="PANTHER" id="PTHR10642:SF26">
    <property type="entry name" value="RIBONUCLEASE H1"/>
    <property type="match status" value="1"/>
</dbReference>
<dbReference type="Pfam" id="PF00075">
    <property type="entry name" value="RNase_H"/>
    <property type="match status" value="1"/>
</dbReference>
<dbReference type="SUPFAM" id="SSF53098">
    <property type="entry name" value="Ribonuclease H-like"/>
    <property type="match status" value="1"/>
</dbReference>
<dbReference type="PROSITE" id="PS50879">
    <property type="entry name" value="RNASE_H_1"/>
    <property type="match status" value="1"/>
</dbReference>
<evidence type="ECO:0000255" key="1">
    <source>
        <dbReference type="HAMAP-Rule" id="MF_00042"/>
    </source>
</evidence>
<evidence type="ECO:0000255" key="2">
    <source>
        <dbReference type="PROSITE-ProRule" id="PRU00408"/>
    </source>
</evidence>
<organism>
    <name type="scientific">Prochlorococcus marinus (strain NATL2A)</name>
    <dbReference type="NCBI Taxonomy" id="59920"/>
    <lineage>
        <taxon>Bacteria</taxon>
        <taxon>Bacillati</taxon>
        <taxon>Cyanobacteriota</taxon>
        <taxon>Cyanophyceae</taxon>
        <taxon>Synechococcales</taxon>
        <taxon>Prochlorococcaceae</taxon>
        <taxon>Prochlorococcus</taxon>
    </lineage>
</organism>
<sequence length="161" mass="17788">MSKEEKLAIAAATDGACSGNPGPGGWGALIRFQDGSEIEFGGNSPETTNNRMELQAALFILEKLKNIKFAPSLTIKTDSKYLIDGMDKWMPNWKKKGWKTASGKPVLNQDLWKALDHPELPKIKLQYVKGHSGEKDNDRVDAIAVAFSKGRKIQLKDFANN</sequence>
<reference key="1">
    <citation type="journal article" date="2007" name="PLoS Genet.">
        <title>Patterns and implications of gene gain and loss in the evolution of Prochlorococcus.</title>
        <authorList>
            <person name="Kettler G.C."/>
            <person name="Martiny A.C."/>
            <person name="Huang K."/>
            <person name="Zucker J."/>
            <person name="Coleman M.L."/>
            <person name="Rodrigue S."/>
            <person name="Chen F."/>
            <person name="Lapidus A."/>
            <person name="Ferriera S."/>
            <person name="Johnson J."/>
            <person name="Steglich C."/>
            <person name="Church G.M."/>
            <person name="Richardson P."/>
            <person name="Chisholm S.W."/>
        </authorList>
    </citation>
    <scope>NUCLEOTIDE SEQUENCE [LARGE SCALE GENOMIC DNA]</scope>
    <source>
        <strain>NATL2A</strain>
    </source>
</reference>
<comment type="function">
    <text evidence="1">Endonuclease that specifically degrades the RNA of RNA-DNA hybrids.</text>
</comment>
<comment type="catalytic activity">
    <reaction evidence="1">
        <text>Endonucleolytic cleavage to 5'-phosphomonoester.</text>
        <dbReference type="EC" id="3.1.26.4"/>
    </reaction>
</comment>
<comment type="cofactor">
    <cofactor evidence="1">
        <name>Mg(2+)</name>
        <dbReference type="ChEBI" id="CHEBI:18420"/>
    </cofactor>
    <text evidence="1">Binds 1 Mg(2+) ion per subunit. May bind a second metal ion at a regulatory site, or after substrate binding.</text>
</comment>
<comment type="subunit">
    <text evidence="1">Monomer.</text>
</comment>
<comment type="subcellular location">
    <subcellularLocation>
        <location evidence="1">Cytoplasm</location>
    </subcellularLocation>
</comment>
<comment type="similarity">
    <text evidence="1">Belongs to the RNase H family.</text>
</comment>
<protein>
    <recommendedName>
        <fullName evidence="1">Ribonuclease H</fullName>
        <shortName evidence="1">RNase H</shortName>
        <ecNumber evidence="1">3.1.26.4</ecNumber>
    </recommendedName>
</protein>
<feature type="chain" id="PRO_0000332651" description="Ribonuclease H">
    <location>
        <begin position="1"/>
        <end position="161"/>
    </location>
</feature>
<feature type="domain" description="RNase H type-1" evidence="2">
    <location>
        <begin position="5"/>
        <end position="149"/>
    </location>
</feature>
<feature type="binding site" evidence="1">
    <location>
        <position position="14"/>
    </location>
    <ligand>
        <name>Mg(2+)</name>
        <dbReference type="ChEBI" id="CHEBI:18420"/>
        <label>1</label>
    </ligand>
</feature>
<feature type="binding site" evidence="1">
    <location>
        <position position="14"/>
    </location>
    <ligand>
        <name>Mg(2+)</name>
        <dbReference type="ChEBI" id="CHEBI:18420"/>
        <label>2</label>
    </ligand>
</feature>
<feature type="binding site" evidence="1">
    <location>
        <position position="53"/>
    </location>
    <ligand>
        <name>Mg(2+)</name>
        <dbReference type="ChEBI" id="CHEBI:18420"/>
        <label>1</label>
    </ligand>
</feature>
<feature type="binding site" evidence="1">
    <location>
        <position position="78"/>
    </location>
    <ligand>
        <name>Mg(2+)</name>
        <dbReference type="ChEBI" id="CHEBI:18420"/>
        <label>1</label>
    </ligand>
</feature>
<feature type="binding site" evidence="1">
    <location>
        <position position="141"/>
    </location>
    <ligand>
        <name>Mg(2+)</name>
        <dbReference type="ChEBI" id="CHEBI:18420"/>
        <label>2</label>
    </ligand>
</feature>
<accession>Q46HH3</accession>
<name>RNH_PROMT</name>